<protein>
    <recommendedName>
        <fullName evidence="1">Putative pre-16S rRNA nuclease</fullName>
        <ecNumber evidence="1">3.1.-.-</ecNumber>
    </recommendedName>
</protein>
<reference key="1">
    <citation type="journal article" date="2009" name="BMC Genomics">
        <title>Evidence for niche adaptation in the genome of the bovine pathogen Streptococcus uberis.</title>
        <authorList>
            <person name="Ward P.N."/>
            <person name="Holden M.T.G."/>
            <person name="Leigh J.A."/>
            <person name="Lennard N."/>
            <person name="Bignell A."/>
            <person name="Barron A."/>
            <person name="Clark L."/>
            <person name="Quail M.A."/>
            <person name="Woodward J."/>
            <person name="Barrell B.G."/>
            <person name="Egan S.A."/>
            <person name="Field T.R."/>
            <person name="Maskell D."/>
            <person name="Kehoe M."/>
            <person name="Dowson C.G."/>
            <person name="Chanter N."/>
            <person name="Whatmore A.M."/>
            <person name="Bentley S.D."/>
            <person name="Parkhill J."/>
        </authorList>
    </citation>
    <scope>NUCLEOTIDE SEQUENCE [LARGE SCALE GENOMIC DNA]</scope>
    <source>
        <strain>ATCC BAA-854 / 0140J</strain>
    </source>
</reference>
<dbReference type="EC" id="3.1.-.-" evidence="1"/>
<dbReference type="EMBL" id="AM946015">
    <property type="protein sequence ID" value="CAR43762.1"/>
    <property type="molecule type" value="Genomic_DNA"/>
</dbReference>
<dbReference type="SMR" id="B9DW62"/>
<dbReference type="STRING" id="218495.SUB1775"/>
<dbReference type="KEGG" id="sub:SUB1775"/>
<dbReference type="eggNOG" id="COG0816">
    <property type="taxonomic scope" value="Bacteria"/>
</dbReference>
<dbReference type="HOGENOM" id="CLU_098240_2_0_9"/>
<dbReference type="OrthoDB" id="9796140at2"/>
<dbReference type="Proteomes" id="UP000000449">
    <property type="component" value="Chromosome"/>
</dbReference>
<dbReference type="GO" id="GO:0005829">
    <property type="term" value="C:cytosol"/>
    <property type="evidence" value="ECO:0007669"/>
    <property type="project" value="TreeGrafter"/>
</dbReference>
<dbReference type="GO" id="GO:0004518">
    <property type="term" value="F:nuclease activity"/>
    <property type="evidence" value="ECO:0007669"/>
    <property type="project" value="UniProtKB-KW"/>
</dbReference>
<dbReference type="GO" id="GO:0000967">
    <property type="term" value="P:rRNA 5'-end processing"/>
    <property type="evidence" value="ECO:0007669"/>
    <property type="project" value="UniProtKB-UniRule"/>
</dbReference>
<dbReference type="CDD" id="cd16964">
    <property type="entry name" value="YqgF"/>
    <property type="match status" value="1"/>
</dbReference>
<dbReference type="FunFam" id="3.30.420.140:FF:000003">
    <property type="entry name" value="Putative pre-16S rRNA nuclease"/>
    <property type="match status" value="1"/>
</dbReference>
<dbReference type="Gene3D" id="3.30.420.140">
    <property type="entry name" value="YqgF/RNase H-like domain"/>
    <property type="match status" value="1"/>
</dbReference>
<dbReference type="HAMAP" id="MF_00651">
    <property type="entry name" value="Nuclease_YqgF"/>
    <property type="match status" value="1"/>
</dbReference>
<dbReference type="InterPro" id="IPR012337">
    <property type="entry name" value="RNaseH-like_sf"/>
</dbReference>
<dbReference type="InterPro" id="IPR005227">
    <property type="entry name" value="YqgF"/>
</dbReference>
<dbReference type="InterPro" id="IPR006641">
    <property type="entry name" value="YqgF/RNaseH-like_dom"/>
</dbReference>
<dbReference type="InterPro" id="IPR037027">
    <property type="entry name" value="YqgF/RNaseH-like_dom_sf"/>
</dbReference>
<dbReference type="NCBIfam" id="TIGR00250">
    <property type="entry name" value="RNAse_H_YqgF"/>
    <property type="match status" value="1"/>
</dbReference>
<dbReference type="PANTHER" id="PTHR33317">
    <property type="entry name" value="POLYNUCLEOTIDYL TRANSFERASE, RIBONUCLEASE H-LIKE SUPERFAMILY PROTEIN"/>
    <property type="match status" value="1"/>
</dbReference>
<dbReference type="PANTHER" id="PTHR33317:SF4">
    <property type="entry name" value="POLYNUCLEOTIDYL TRANSFERASE, RIBONUCLEASE H-LIKE SUPERFAMILY PROTEIN"/>
    <property type="match status" value="1"/>
</dbReference>
<dbReference type="Pfam" id="PF03652">
    <property type="entry name" value="RuvX"/>
    <property type="match status" value="1"/>
</dbReference>
<dbReference type="SMART" id="SM00732">
    <property type="entry name" value="YqgFc"/>
    <property type="match status" value="1"/>
</dbReference>
<dbReference type="SUPFAM" id="SSF53098">
    <property type="entry name" value="Ribonuclease H-like"/>
    <property type="match status" value="1"/>
</dbReference>
<name>YQGF_STRU0</name>
<accession>B9DW62</accession>
<comment type="function">
    <text evidence="1">Could be a nuclease involved in processing of the 5'-end of pre-16S rRNA.</text>
</comment>
<comment type="subcellular location">
    <subcellularLocation>
        <location evidence="1">Cytoplasm</location>
    </subcellularLocation>
</comment>
<comment type="similarity">
    <text evidence="1">Belongs to the YqgF nuclease family.</text>
</comment>
<proteinExistence type="inferred from homology"/>
<organism>
    <name type="scientific">Streptococcus uberis (strain ATCC BAA-854 / 0140J)</name>
    <dbReference type="NCBI Taxonomy" id="218495"/>
    <lineage>
        <taxon>Bacteria</taxon>
        <taxon>Bacillati</taxon>
        <taxon>Bacillota</taxon>
        <taxon>Bacilli</taxon>
        <taxon>Lactobacillales</taxon>
        <taxon>Streptococcaceae</taxon>
        <taxon>Streptococcus</taxon>
    </lineage>
</organism>
<evidence type="ECO:0000255" key="1">
    <source>
        <dbReference type="HAMAP-Rule" id="MF_00651"/>
    </source>
</evidence>
<gene>
    <name type="ordered locus">SUB1775</name>
</gene>
<sequence length="139" mass="15672">MRIMGLDVGSKTVGVAISDPLGFTAQGLEIIPIDEEKNSFGFERLSELVKQYQVDKFVVGLPKNMNNTSGPRVEASQAYGKKIEDLFHIPVVYQDERLTTVQAERMLIEQADISRGKRKKVIDKLAAQLILQNYLDRTF</sequence>
<feature type="chain" id="PRO_1000147494" description="Putative pre-16S rRNA nuclease">
    <location>
        <begin position="1"/>
        <end position="139"/>
    </location>
</feature>
<keyword id="KW-0963">Cytoplasm</keyword>
<keyword id="KW-0378">Hydrolase</keyword>
<keyword id="KW-0540">Nuclease</keyword>
<keyword id="KW-1185">Reference proteome</keyword>
<keyword id="KW-0690">Ribosome biogenesis</keyword>